<feature type="chain" id="PRO_1000091731" description="Elongation factor 2">
    <location>
        <begin position="1"/>
        <end position="727"/>
    </location>
</feature>
<feature type="domain" description="tr-type G">
    <location>
        <begin position="19"/>
        <end position="260"/>
    </location>
</feature>
<feature type="binding site" evidence="1">
    <location>
        <begin position="28"/>
        <end position="35"/>
    </location>
    <ligand>
        <name>GTP</name>
        <dbReference type="ChEBI" id="CHEBI:37565"/>
    </ligand>
</feature>
<feature type="binding site" evidence="1">
    <location>
        <begin position="94"/>
        <end position="98"/>
    </location>
    <ligand>
        <name>GTP</name>
        <dbReference type="ChEBI" id="CHEBI:37565"/>
    </ligand>
</feature>
<feature type="binding site" evidence="1">
    <location>
        <begin position="148"/>
        <end position="151"/>
    </location>
    <ligand>
        <name>GTP</name>
        <dbReference type="ChEBI" id="CHEBI:37565"/>
    </ligand>
</feature>
<feature type="modified residue" description="Diphthamide" evidence="1">
    <location>
        <position position="603"/>
    </location>
</feature>
<evidence type="ECO:0000255" key="1">
    <source>
        <dbReference type="HAMAP-Rule" id="MF_00054"/>
    </source>
</evidence>
<organism>
    <name type="scientific">Methanococcus maripaludis (strain C6 / ATCC BAA-1332)</name>
    <dbReference type="NCBI Taxonomy" id="444158"/>
    <lineage>
        <taxon>Archaea</taxon>
        <taxon>Methanobacteriati</taxon>
        <taxon>Methanobacteriota</taxon>
        <taxon>Methanomada group</taxon>
        <taxon>Methanococci</taxon>
        <taxon>Methanococcales</taxon>
        <taxon>Methanococcaceae</taxon>
        <taxon>Methanococcus</taxon>
    </lineage>
</organism>
<name>EF2_METM6</name>
<reference key="1">
    <citation type="submission" date="2007-10" db="EMBL/GenBank/DDBJ databases">
        <title>Complete sequence of Methanococcus maripaludis C6.</title>
        <authorList>
            <consortium name="US DOE Joint Genome Institute"/>
            <person name="Copeland A."/>
            <person name="Lucas S."/>
            <person name="Lapidus A."/>
            <person name="Barry K."/>
            <person name="Glavina del Rio T."/>
            <person name="Dalin E."/>
            <person name="Tice H."/>
            <person name="Pitluck S."/>
            <person name="Clum A."/>
            <person name="Schmutz J."/>
            <person name="Larimer F."/>
            <person name="Land M."/>
            <person name="Hauser L."/>
            <person name="Kyrpides N."/>
            <person name="Mikhailova N."/>
            <person name="Sieprawska-Lupa M."/>
            <person name="Whitman W.B."/>
            <person name="Richardson P."/>
        </authorList>
    </citation>
    <scope>NUCLEOTIDE SEQUENCE [LARGE SCALE GENOMIC DNA]</scope>
    <source>
        <strain>C6 / ATCC BAA-1332</strain>
    </source>
</reference>
<accession>A9A9U4</accession>
<sequence length="727" mass="80115">MGRRAKMVEKVKTLMEKHDQIRNMGICAHIDHGKTTLSDNLLAGAGMISKELAGDQLALDFDEEEAARGITIYAANVSMVHEYNGKEYLINLIDTPGHVDFGGDVTRAMRAIDGAVVVCCAVEGVMPQTETVLRQALKEKVKPVLFINKVDRLINELKLTPEELQGRFMKIIAEVNKLIEKMAPEEFKKDWLCDVVTGKVAFGSAYNNWAISVPYMQRSGISFKDIIDYCEQEKQGELADRAPLHEVILDMAITHLPNPLQAQKYRIPNIWKGDSESTIGKSMVACDPNGPLAGVVTKIIVDKHAGAISACRLFSGRIKQGDDLYLVGSKQKARAQQVSIFMGAERVQVPSISAGNICALTGLREATAGETVCSPSEILEPGFESLTHTSEPVITVAIEAKNTKDLPKLIEILRQIAREDNTVRVEINEETGEHLISGMGELHIEVITNTKIGRDGGIEVDVGEPIVVYRETITGTSPEIEGKSPNKHNKLYMIAEPMDESVYAAYVEGKIHDEDYKKKTTADGEARLVEAGLEKEQAKRVMSIYNGNMIVNMTRGIVQLDEARELIIEGFKEGVRNGPLAAEKVQGVKIRLVDATFHEDAIHRGPAQIIPAVRFGVRDAVAQAKPVLLEPMQSVYINTPQDYMGDGMKEINNRRGQILDMEQEGDMSIIKSSVPVAEMFGFAGAIRGATQGRCLWSVEFSGFERVPAELQPKIAKQIRDRKGLKSE</sequence>
<dbReference type="EMBL" id="CP000867">
    <property type="protein sequence ID" value="ABX02117.1"/>
    <property type="molecule type" value="Genomic_DNA"/>
</dbReference>
<dbReference type="SMR" id="A9A9U4"/>
<dbReference type="STRING" id="444158.MmarC6_1304"/>
<dbReference type="KEGG" id="mmx:MmarC6_1304"/>
<dbReference type="eggNOG" id="arCOG01559">
    <property type="taxonomic scope" value="Archaea"/>
</dbReference>
<dbReference type="HOGENOM" id="CLU_002794_11_1_2"/>
<dbReference type="OrthoDB" id="6290at2157"/>
<dbReference type="PhylomeDB" id="A9A9U4"/>
<dbReference type="GO" id="GO:0005829">
    <property type="term" value="C:cytosol"/>
    <property type="evidence" value="ECO:0007669"/>
    <property type="project" value="TreeGrafter"/>
</dbReference>
<dbReference type="GO" id="GO:1990904">
    <property type="term" value="C:ribonucleoprotein complex"/>
    <property type="evidence" value="ECO:0007669"/>
    <property type="project" value="TreeGrafter"/>
</dbReference>
<dbReference type="GO" id="GO:0005525">
    <property type="term" value="F:GTP binding"/>
    <property type="evidence" value="ECO:0007669"/>
    <property type="project" value="UniProtKB-UniRule"/>
</dbReference>
<dbReference type="GO" id="GO:0003924">
    <property type="term" value="F:GTPase activity"/>
    <property type="evidence" value="ECO:0007669"/>
    <property type="project" value="InterPro"/>
</dbReference>
<dbReference type="GO" id="GO:0003746">
    <property type="term" value="F:translation elongation factor activity"/>
    <property type="evidence" value="ECO:0007669"/>
    <property type="project" value="UniProtKB-UniRule"/>
</dbReference>
<dbReference type="CDD" id="cd01681">
    <property type="entry name" value="aeEF2_snRNP_like_IV"/>
    <property type="match status" value="1"/>
</dbReference>
<dbReference type="CDD" id="cd01885">
    <property type="entry name" value="EF2"/>
    <property type="match status" value="1"/>
</dbReference>
<dbReference type="CDD" id="cd16268">
    <property type="entry name" value="EF2_II"/>
    <property type="match status" value="1"/>
</dbReference>
<dbReference type="CDD" id="cd16261">
    <property type="entry name" value="EF2_snRNP_III"/>
    <property type="match status" value="1"/>
</dbReference>
<dbReference type="CDD" id="cd01514">
    <property type="entry name" value="Elongation_Factor_C"/>
    <property type="match status" value="1"/>
</dbReference>
<dbReference type="FunFam" id="3.40.50.300:FF:000684">
    <property type="entry name" value="Elongation factor 2"/>
    <property type="match status" value="1"/>
</dbReference>
<dbReference type="FunFam" id="3.30.70.240:FF:000001">
    <property type="entry name" value="Elongation factor G"/>
    <property type="match status" value="1"/>
</dbReference>
<dbReference type="FunFam" id="3.30.70.870:FF:000002">
    <property type="entry name" value="Translation elongation factor 2"/>
    <property type="match status" value="1"/>
</dbReference>
<dbReference type="Gene3D" id="3.30.230.10">
    <property type="match status" value="1"/>
</dbReference>
<dbReference type="Gene3D" id="3.30.70.240">
    <property type="match status" value="1"/>
</dbReference>
<dbReference type="Gene3D" id="3.30.70.870">
    <property type="entry name" value="Elongation Factor G (Translational Gtpase), domain 3"/>
    <property type="match status" value="1"/>
</dbReference>
<dbReference type="Gene3D" id="3.40.50.300">
    <property type="entry name" value="P-loop containing nucleotide triphosphate hydrolases"/>
    <property type="match status" value="1"/>
</dbReference>
<dbReference type="Gene3D" id="2.40.30.10">
    <property type="entry name" value="Translation factors"/>
    <property type="match status" value="1"/>
</dbReference>
<dbReference type="HAMAP" id="MF_00054_A">
    <property type="entry name" value="EF_G_EF_2_A"/>
    <property type="match status" value="1"/>
</dbReference>
<dbReference type="InterPro" id="IPR053905">
    <property type="entry name" value="EF-G-like_DII"/>
</dbReference>
<dbReference type="InterPro" id="IPR041095">
    <property type="entry name" value="EFG_II"/>
</dbReference>
<dbReference type="InterPro" id="IPR035647">
    <property type="entry name" value="EFG_III/V"/>
</dbReference>
<dbReference type="InterPro" id="IPR000640">
    <property type="entry name" value="EFG_V-like"/>
</dbReference>
<dbReference type="InterPro" id="IPR031157">
    <property type="entry name" value="G_TR_CS"/>
</dbReference>
<dbReference type="InterPro" id="IPR027417">
    <property type="entry name" value="P-loop_NTPase"/>
</dbReference>
<dbReference type="InterPro" id="IPR020568">
    <property type="entry name" value="Ribosomal_Su5_D2-typ_SF"/>
</dbReference>
<dbReference type="InterPro" id="IPR014721">
    <property type="entry name" value="Ribsml_uS5_D2-typ_fold_subgr"/>
</dbReference>
<dbReference type="InterPro" id="IPR005225">
    <property type="entry name" value="Small_GTP-bd"/>
</dbReference>
<dbReference type="InterPro" id="IPR000795">
    <property type="entry name" value="T_Tr_GTP-bd_dom"/>
</dbReference>
<dbReference type="InterPro" id="IPR009000">
    <property type="entry name" value="Transl_B-barrel_sf"/>
</dbReference>
<dbReference type="InterPro" id="IPR004543">
    <property type="entry name" value="Transl_elong_EFG/EF2_arc"/>
</dbReference>
<dbReference type="InterPro" id="IPR005517">
    <property type="entry name" value="Transl_elong_EFG/EF2_IV"/>
</dbReference>
<dbReference type="NCBIfam" id="TIGR00490">
    <property type="entry name" value="aEF-2"/>
    <property type="match status" value="1"/>
</dbReference>
<dbReference type="NCBIfam" id="TIGR00231">
    <property type="entry name" value="small_GTP"/>
    <property type="match status" value="1"/>
</dbReference>
<dbReference type="PANTHER" id="PTHR42908:SF3">
    <property type="entry name" value="ELONGATION FACTOR-LIKE GTPASE 1"/>
    <property type="match status" value="1"/>
</dbReference>
<dbReference type="PANTHER" id="PTHR42908">
    <property type="entry name" value="TRANSLATION ELONGATION FACTOR-RELATED"/>
    <property type="match status" value="1"/>
</dbReference>
<dbReference type="Pfam" id="PF22042">
    <property type="entry name" value="EF-G_D2"/>
    <property type="match status" value="1"/>
</dbReference>
<dbReference type="Pfam" id="PF00679">
    <property type="entry name" value="EFG_C"/>
    <property type="match status" value="1"/>
</dbReference>
<dbReference type="Pfam" id="PF14492">
    <property type="entry name" value="EFG_III"/>
    <property type="match status" value="1"/>
</dbReference>
<dbReference type="Pfam" id="PF03764">
    <property type="entry name" value="EFG_IV"/>
    <property type="match status" value="1"/>
</dbReference>
<dbReference type="Pfam" id="PF00009">
    <property type="entry name" value="GTP_EFTU"/>
    <property type="match status" value="1"/>
</dbReference>
<dbReference type="PRINTS" id="PR00315">
    <property type="entry name" value="ELONGATNFCT"/>
</dbReference>
<dbReference type="SMART" id="SM00838">
    <property type="entry name" value="EFG_C"/>
    <property type="match status" value="1"/>
</dbReference>
<dbReference type="SMART" id="SM00889">
    <property type="entry name" value="EFG_IV"/>
    <property type="match status" value="1"/>
</dbReference>
<dbReference type="SUPFAM" id="SSF54980">
    <property type="entry name" value="EF-G C-terminal domain-like"/>
    <property type="match status" value="2"/>
</dbReference>
<dbReference type="SUPFAM" id="SSF52540">
    <property type="entry name" value="P-loop containing nucleoside triphosphate hydrolases"/>
    <property type="match status" value="1"/>
</dbReference>
<dbReference type="SUPFAM" id="SSF54211">
    <property type="entry name" value="Ribosomal protein S5 domain 2-like"/>
    <property type="match status" value="1"/>
</dbReference>
<dbReference type="SUPFAM" id="SSF50447">
    <property type="entry name" value="Translation proteins"/>
    <property type="match status" value="1"/>
</dbReference>
<dbReference type="PROSITE" id="PS00301">
    <property type="entry name" value="G_TR_1"/>
    <property type="match status" value="1"/>
</dbReference>
<dbReference type="PROSITE" id="PS51722">
    <property type="entry name" value="G_TR_2"/>
    <property type="match status" value="1"/>
</dbReference>
<protein>
    <recommendedName>
        <fullName evidence="1">Elongation factor 2</fullName>
        <shortName evidence="1">EF-2</shortName>
    </recommendedName>
</protein>
<proteinExistence type="inferred from homology"/>
<keyword id="KW-0963">Cytoplasm</keyword>
<keyword id="KW-0251">Elongation factor</keyword>
<keyword id="KW-0342">GTP-binding</keyword>
<keyword id="KW-0547">Nucleotide-binding</keyword>
<keyword id="KW-0648">Protein biosynthesis</keyword>
<gene>
    <name evidence="1" type="primary">fusA</name>
    <name type="ordered locus">MmarC6_1304</name>
</gene>
<comment type="function">
    <text evidence="1">Catalyzes the GTP-dependent ribosomal translocation step during translation elongation. During this step, the ribosome changes from the pre-translocational (PRE) to the post-translocational (POST) state as the newly formed A-site-bound peptidyl-tRNA and P-site-bound deacylated tRNA move to the P and E sites, respectively. Catalyzes the coordinated movement of the two tRNA molecules, the mRNA and conformational changes in the ribosome.</text>
</comment>
<comment type="subcellular location">
    <subcellularLocation>
        <location evidence="1">Cytoplasm</location>
    </subcellularLocation>
</comment>
<comment type="similarity">
    <text evidence="1">Belongs to the TRAFAC class translation factor GTPase superfamily. Classic translation factor GTPase family. EF-G/EF-2 subfamily.</text>
</comment>